<protein>
    <recommendedName>
        <fullName evidence="1">ATP phosphoribosyltransferase</fullName>
        <shortName evidence="1">ATP-PRT</shortName>
        <shortName evidence="1">ATP-PRTase</shortName>
        <ecNumber evidence="1">2.4.2.17</ecNumber>
    </recommendedName>
</protein>
<reference key="1">
    <citation type="journal article" date="2008" name="J. Bacteriol.">
        <title>Genome sequence of Staphylococcus aureus strain Newman and comparative analysis of staphylococcal genomes: polymorphism and evolution of two major pathogenicity islands.</title>
        <authorList>
            <person name="Baba T."/>
            <person name="Bae T."/>
            <person name="Schneewind O."/>
            <person name="Takeuchi F."/>
            <person name="Hiramatsu K."/>
        </authorList>
    </citation>
    <scope>NUCLEOTIDE SEQUENCE [LARGE SCALE GENOMIC DNA]</scope>
    <source>
        <strain>Newman</strain>
    </source>
</reference>
<sequence length="204" mass="22643">MLRIAIAKGRLMDSLINYLDVIEYTTLSETLKNRERQLLLSVDNIECILVKGSDVPIYVEQGMADIGIVGSDILDERQYNVNNLLNMPFGACHFAVAAKPETTNYRKIATSYVHTAETYFKSKGIDVELIKLNGSVELACVVDMVDGIVDIVQTGTTLKANGLVEKQHISDINARLITNKAAYFKKSQLIEQFIRSLEVSIANA</sequence>
<organism>
    <name type="scientific">Staphylococcus aureus (strain Newman)</name>
    <dbReference type="NCBI Taxonomy" id="426430"/>
    <lineage>
        <taxon>Bacteria</taxon>
        <taxon>Bacillati</taxon>
        <taxon>Bacillota</taxon>
        <taxon>Bacilli</taxon>
        <taxon>Bacillales</taxon>
        <taxon>Staphylococcaceae</taxon>
        <taxon>Staphylococcus</taxon>
    </lineage>
</organism>
<evidence type="ECO:0000255" key="1">
    <source>
        <dbReference type="HAMAP-Rule" id="MF_01018"/>
    </source>
</evidence>
<gene>
    <name evidence="1" type="primary">hisG</name>
    <name type="ordered locus">NWMN_2577</name>
</gene>
<feature type="chain" id="PRO_1000072939" description="ATP phosphoribosyltransferase">
    <location>
        <begin position="1"/>
        <end position="204"/>
    </location>
</feature>
<keyword id="KW-0028">Amino-acid biosynthesis</keyword>
<keyword id="KW-0067">ATP-binding</keyword>
<keyword id="KW-0963">Cytoplasm</keyword>
<keyword id="KW-0328">Glycosyltransferase</keyword>
<keyword id="KW-0368">Histidine biosynthesis</keyword>
<keyword id="KW-0547">Nucleotide-binding</keyword>
<keyword id="KW-0808">Transferase</keyword>
<dbReference type="EC" id="2.4.2.17" evidence="1"/>
<dbReference type="EMBL" id="AP009351">
    <property type="protein sequence ID" value="BAF68849.1"/>
    <property type="molecule type" value="Genomic_DNA"/>
</dbReference>
<dbReference type="RefSeq" id="WP_000944149.1">
    <property type="nucleotide sequence ID" value="NZ_JBBIAE010000005.1"/>
</dbReference>
<dbReference type="SMR" id="A6QKG7"/>
<dbReference type="KEGG" id="sae:NWMN_2577"/>
<dbReference type="HOGENOM" id="CLU_038115_2_0_9"/>
<dbReference type="UniPathway" id="UPA00031">
    <property type="reaction ID" value="UER00006"/>
</dbReference>
<dbReference type="Proteomes" id="UP000006386">
    <property type="component" value="Chromosome"/>
</dbReference>
<dbReference type="GO" id="GO:0005737">
    <property type="term" value="C:cytoplasm"/>
    <property type="evidence" value="ECO:0007669"/>
    <property type="project" value="UniProtKB-SubCell"/>
</dbReference>
<dbReference type="GO" id="GO:0005524">
    <property type="term" value="F:ATP binding"/>
    <property type="evidence" value="ECO:0007669"/>
    <property type="project" value="UniProtKB-KW"/>
</dbReference>
<dbReference type="GO" id="GO:0003879">
    <property type="term" value="F:ATP phosphoribosyltransferase activity"/>
    <property type="evidence" value="ECO:0007669"/>
    <property type="project" value="UniProtKB-UniRule"/>
</dbReference>
<dbReference type="GO" id="GO:0000105">
    <property type="term" value="P:L-histidine biosynthetic process"/>
    <property type="evidence" value="ECO:0007669"/>
    <property type="project" value="UniProtKB-UniRule"/>
</dbReference>
<dbReference type="CDD" id="cd13595">
    <property type="entry name" value="PBP2_HisGs"/>
    <property type="match status" value="1"/>
</dbReference>
<dbReference type="FunFam" id="3.40.190.10:FF:000008">
    <property type="entry name" value="ATP phosphoribosyltransferase"/>
    <property type="match status" value="1"/>
</dbReference>
<dbReference type="Gene3D" id="3.40.190.10">
    <property type="entry name" value="Periplasmic binding protein-like II"/>
    <property type="match status" value="2"/>
</dbReference>
<dbReference type="HAMAP" id="MF_01018">
    <property type="entry name" value="HisG_Short"/>
    <property type="match status" value="1"/>
</dbReference>
<dbReference type="InterPro" id="IPR013820">
    <property type="entry name" value="ATP_PRibTrfase_cat"/>
</dbReference>
<dbReference type="InterPro" id="IPR001348">
    <property type="entry name" value="ATP_PRibTrfase_HisG"/>
</dbReference>
<dbReference type="InterPro" id="IPR024893">
    <property type="entry name" value="ATP_PRibTrfase_HisG_short"/>
</dbReference>
<dbReference type="NCBIfam" id="TIGR00070">
    <property type="entry name" value="hisG"/>
    <property type="match status" value="1"/>
</dbReference>
<dbReference type="PANTHER" id="PTHR21403:SF8">
    <property type="entry name" value="ATP PHOSPHORIBOSYLTRANSFERASE"/>
    <property type="match status" value="1"/>
</dbReference>
<dbReference type="PANTHER" id="PTHR21403">
    <property type="entry name" value="ATP PHOSPHORIBOSYLTRANSFERASE ATP-PRTASE"/>
    <property type="match status" value="1"/>
</dbReference>
<dbReference type="Pfam" id="PF01634">
    <property type="entry name" value="HisG"/>
    <property type="match status" value="1"/>
</dbReference>
<dbReference type="SUPFAM" id="SSF53850">
    <property type="entry name" value="Periplasmic binding protein-like II"/>
    <property type="match status" value="1"/>
</dbReference>
<comment type="function">
    <text evidence="1">Catalyzes the condensation of ATP and 5-phosphoribose 1-diphosphate to form N'-(5'-phosphoribosyl)-ATP (PR-ATP). Has a crucial role in the pathway because the rate of histidine biosynthesis seems to be controlled primarily by regulation of HisG enzymatic activity.</text>
</comment>
<comment type="catalytic activity">
    <reaction evidence="1">
        <text>1-(5-phospho-beta-D-ribosyl)-ATP + diphosphate = 5-phospho-alpha-D-ribose 1-diphosphate + ATP</text>
        <dbReference type="Rhea" id="RHEA:18473"/>
        <dbReference type="ChEBI" id="CHEBI:30616"/>
        <dbReference type="ChEBI" id="CHEBI:33019"/>
        <dbReference type="ChEBI" id="CHEBI:58017"/>
        <dbReference type="ChEBI" id="CHEBI:73183"/>
        <dbReference type="EC" id="2.4.2.17"/>
    </reaction>
</comment>
<comment type="pathway">
    <text evidence="1">Amino-acid biosynthesis; L-histidine biosynthesis; L-histidine from 5-phospho-alpha-D-ribose 1-diphosphate: step 1/9.</text>
</comment>
<comment type="subunit">
    <text evidence="1">Heteromultimer composed of HisG and HisZ subunits.</text>
</comment>
<comment type="subcellular location">
    <subcellularLocation>
        <location evidence="1">Cytoplasm</location>
    </subcellularLocation>
</comment>
<comment type="domain">
    <text>Lacks the C-terminal regulatory region which is replaced by HisZ.</text>
</comment>
<comment type="similarity">
    <text evidence="1">Belongs to the ATP phosphoribosyltransferase family. Short subfamily.</text>
</comment>
<proteinExistence type="inferred from homology"/>
<name>HIS1_STAAE</name>
<accession>A6QKG7</accession>